<keyword id="KW-1185">Reference proteome</keyword>
<keyword id="KW-0677">Repeat</keyword>
<keyword id="KW-0802">TPR repeat</keyword>
<organism>
    <name type="scientific">Acanthamoeba polyphaga mimivirus</name>
    <name type="common">APMV</name>
    <dbReference type="NCBI Taxonomy" id="212035"/>
    <lineage>
        <taxon>Viruses</taxon>
        <taxon>Varidnaviria</taxon>
        <taxon>Bamfordvirae</taxon>
        <taxon>Nucleocytoviricota</taxon>
        <taxon>Megaviricetes</taxon>
        <taxon>Imitervirales</taxon>
        <taxon>Mimiviridae</taxon>
        <taxon>Megamimivirinae</taxon>
        <taxon>Mimivirus</taxon>
        <taxon>Mimivirus bradfordmassiliense</taxon>
    </lineage>
</organism>
<feature type="chain" id="PRO_0000106426" description="Putative TPR repeat-containing protein R856">
    <location>
        <begin position="1"/>
        <end position="342"/>
    </location>
</feature>
<feature type="repeat" description="TPR 1">
    <location>
        <begin position="36"/>
        <end position="69"/>
    </location>
</feature>
<feature type="repeat" description="TPR 2">
    <location>
        <begin position="77"/>
        <end position="110"/>
    </location>
</feature>
<feature type="repeat" description="TPR 3">
    <location>
        <begin position="119"/>
        <end position="152"/>
    </location>
</feature>
<feature type="repeat" description="TPR 4">
    <location>
        <begin position="161"/>
        <end position="194"/>
    </location>
</feature>
<feature type="repeat" description="TPR 5">
    <location>
        <begin position="203"/>
        <end position="236"/>
    </location>
</feature>
<feature type="repeat" description="TPR 6">
    <location>
        <begin position="245"/>
        <end position="278"/>
    </location>
</feature>
<feature type="repeat" description="TPR 7">
    <location>
        <begin position="291"/>
        <end position="324"/>
    </location>
</feature>
<protein>
    <recommendedName>
        <fullName>Putative TPR repeat-containing protein R856</fullName>
    </recommendedName>
</protein>
<accession>Q5UQQ7</accession>
<proteinExistence type="predicted"/>
<organismHost>
    <name type="scientific">Acanthamoeba polyphaga</name>
    <name type="common">Amoeba</name>
    <dbReference type="NCBI Taxonomy" id="5757"/>
</organismHost>
<dbReference type="EMBL" id="AY653733">
    <property type="protein sequence ID" value="AAV51114.1"/>
    <property type="molecule type" value="Genomic_DNA"/>
</dbReference>
<dbReference type="SMR" id="Q5UQQ7"/>
<dbReference type="KEGG" id="vg:9925517"/>
<dbReference type="Proteomes" id="UP000001134">
    <property type="component" value="Genome"/>
</dbReference>
<dbReference type="Gene3D" id="1.25.40.10">
    <property type="entry name" value="Tetratricopeptide repeat domain"/>
    <property type="match status" value="2"/>
</dbReference>
<dbReference type="InterPro" id="IPR026000">
    <property type="entry name" value="Apc5_dom"/>
</dbReference>
<dbReference type="InterPro" id="IPR011990">
    <property type="entry name" value="TPR-like_helical_dom_sf"/>
</dbReference>
<dbReference type="InterPro" id="IPR019734">
    <property type="entry name" value="TPR_rpt"/>
</dbReference>
<dbReference type="PANTHER" id="PTHR45641:SF19">
    <property type="entry name" value="NEPHROCYSTIN-3"/>
    <property type="match status" value="1"/>
</dbReference>
<dbReference type="PANTHER" id="PTHR45641">
    <property type="entry name" value="TETRATRICOPEPTIDE REPEAT PROTEIN (AFU_ORTHOLOGUE AFUA_6G03870)"/>
    <property type="match status" value="1"/>
</dbReference>
<dbReference type="Pfam" id="PF12862">
    <property type="entry name" value="ANAPC5"/>
    <property type="match status" value="1"/>
</dbReference>
<dbReference type="Pfam" id="PF13424">
    <property type="entry name" value="TPR_12"/>
    <property type="match status" value="2"/>
</dbReference>
<dbReference type="SMART" id="SM00028">
    <property type="entry name" value="TPR"/>
    <property type="match status" value="6"/>
</dbReference>
<dbReference type="SUPFAM" id="SSF48452">
    <property type="entry name" value="TPR-like"/>
    <property type="match status" value="2"/>
</dbReference>
<dbReference type="PROSITE" id="PS50005">
    <property type="entry name" value="TPR"/>
    <property type="match status" value="6"/>
</dbReference>
<dbReference type="PROSITE" id="PS50293">
    <property type="entry name" value="TPR_REGION"/>
    <property type="match status" value="1"/>
</dbReference>
<sequence length="342" mass="39644">MEIINACLKNVGVEENMIEKVIETFQKENDECYNLVHIFNKAAIVFHRNGQHKKSLEMYEKAFGNIFNGEFALSDLFYSVNGMASMYQALGDYDIAIKKYNSVIKIIKDMCLDNNSDLVYALMGIASISQIKGNYDEALSKYNEALEINEKLYGRNHIETAFVLNRLGMLYHELDDNDKSIDHFNESLKIYREKYPNKLFNIAFTISRLAQSLLKMGNDSEALEKYQESIDIFNKIFTISHQAVAFSLYGIGTVYEFRSEYSKALEKYQESLQTYKNVYERSEKYQHYDIASCLYKIGLVYKLSGNDNESTTYLNQANQMFESTSTNINDKNYQACKKFLQD</sequence>
<name>Y856_MIMIV</name>
<gene>
    <name type="ordered locus">MIMI_R856</name>
</gene>
<reference key="1">
    <citation type="journal article" date="2004" name="Science">
        <title>The 1.2-megabase genome sequence of Mimivirus.</title>
        <authorList>
            <person name="Raoult D."/>
            <person name="Audic S."/>
            <person name="Robert C."/>
            <person name="Abergel C."/>
            <person name="Renesto P."/>
            <person name="Ogata H."/>
            <person name="La Scola B."/>
            <person name="Susan M."/>
            <person name="Claverie J.-M."/>
        </authorList>
    </citation>
    <scope>NUCLEOTIDE SEQUENCE [LARGE SCALE GENOMIC DNA]</scope>
    <source>
        <strain>Rowbotham-Bradford</strain>
    </source>
</reference>